<name>ACCA_BRUAB</name>
<sequence>MYNYLDFEKPVADLEGQILELKKLAQEQGSVEMGDEISRLEKRSADALKDIYRKLTPWQKAQIARHPDRPHCLEYIDRLFTEFTPLAGDRKFANDEALQAGFGRFNGTPVAIIGQEKGSDTKTRLKHNFGSARPEGYRKAVRIMEMADRFQLPLITFVDTAGAYPGVSAEERGQAEAIARSTAECLKLRVPVISIIIGEGGSGGAIAIAVANRVYMLEHSIYSVISPEGAASILWHDSTRAKDAASNMRITAQDLFDLKIIDGIIPEPLGGAHRGKESVIDAAGDIIAASLRSMKDIDGETLKQERRQKFLEIGRNI</sequence>
<evidence type="ECO:0000255" key="1">
    <source>
        <dbReference type="HAMAP-Rule" id="MF_00823"/>
    </source>
</evidence>
<evidence type="ECO:0000255" key="2">
    <source>
        <dbReference type="PROSITE-ProRule" id="PRU01137"/>
    </source>
</evidence>
<proteinExistence type="inferred from homology"/>
<organism>
    <name type="scientific">Brucella abortus biovar 1 (strain 9-941)</name>
    <dbReference type="NCBI Taxonomy" id="262698"/>
    <lineage>
        <taxon>Bacteria</taxon>
        <taxon>Pseudomonadati</taxon>
        <taxon>Pseudomonadota</taxon>
        <taxon>Alphaproteobacteria</taxon>
        <taxon>Hyphomicrobiales</taxon>
        <taxon>Brucellaceae</taxon>
        <taxon>Brucella/Ochrobactrum group</taxon>
        <taxon>Brucella</taxon>
    </lineage>
</organism>
<keyword id="KW-0067">ATP-binding</keyword>
<keyword id="KW-0963">Cytoplasm</keyword>
<keyword id="KW-0275">Fatty acid biosynthesis</keyword>
<keyword id="KW-0276">Fatty acid metabolism</keyword>
<keyword id="KW-0444">Lipid biosynthesis</keyword>
<keyword id="KW-0443">Lipid metabolism</keyword>
<keyword id="KW-0547">Nucleotide-binding</keyword>
<keyword id="KW-0808">Transferase</keyword>
<accession>Q57AM5</accession>
<dbReference type="EC" id="2.1.3.15" evidence="1"/>
<dbReference type="EMBL" id="AE017223">
    <property type="protein sequence ID" value="AAX75309.1"/>
    <property type="molecule type" value="Genomic_DNA"/>
</dbReference>
<dbReference type="RefSeq" id="WP_002967020.1">
    <property type="nucleotide sequence ID" value="NC_006932.1"/>
</dbReference>
<dbReference type="SMR" id="Q57AM5"/>
<dbReference type="EnsemblBacteria" id="AAX75309">
    <property type="protein sequence ID" value="AAX75309"/>
    <property type="gene ID" value="BruAb1_2007"/>
</dbReference>
<dbReference type="KEGG" id="bmb:BruAb1_2007"/>
<dbReference type="HOGENOM" id="CLU_015486_0_2_5"/>
<dbReference type="UniPathway" id="UPA00655">
    <property type="reaction ID" value="UER00711"/>
</dbReference>
<dbReference type="Proteomes" id="UP000000540">
    <property type="component" value="Chromosome I"/>
</dbReference>
<dbReference type="GO" id="GO:0009317">
    <property type="term" value="C:acetyl-CoA carboxylase complex"/>
    <property type="evidence" value="ECO:0007669"/>
    <property type="project" value="InterPro"/>
</dbReference>
<dbReference type="GO" id="GO:0003989">
    <property type="term" value="F:acetyl-CoA carboxylase activity"/>
    <property type="evidence" value="ECO:0007669"/>
    <property type="project" value="InterPro"/>
</dbReference>
<dbReference type="GO" id="GO:0005524">
    <property type="term" value="F:ATP binding"/>
    <property type="evidence" value="ECO:0007669"/>
    <property type="project" value="UniProtKB-KW"/>
</dbReference>
<dbReference type="GO" id="GO:0016743">
    <property type="term" value="F:carboxyl- or carbamoyltransferase activity"/>
    <property type="evidence" value="ECO:0007669"/>
    <property type="project" value="UniProtKB-UniRule"/>
</dbReference>
<dbReference type="GO" id="GO:0006633">
    <property type="term" value="P:fatty acid biosynthetic process"/>
    <property type="evidence" value="ECO:0007669"/>
    <property type="project" value="UniProtKB-KW"/>
</dbReference>
<dbReference type="GO" id="GO:2001295">
    <property type="term" value="P:malonyl-CoA biosynthetic process"/>
    <property type="evidence" value="ECO:0007669"/>
    <property type="project" value="UniProtKB-UniRule"/>
</dbReference>
<dbReference type="Gene3D" id="3.90.226.10">
    <property type="entry name" value="2-enoyl-CoA Hydratase, Chain A, domain 1"/>
    <property type="match status" value="1"/>
</dbReference>
<dbReference type="HAMAP" id="MF_00823">
    <property type="entry name" value="AcetylCoA_CT_alpha"/>
    <property type="match status" value="1"/>
</dbReference>
<dbReference type="InterPro" id="IPR001095">
    <property type="entry name" value="Acetyl_CoA_COase_a_su"/>
</dbReference>
<dbReference type="InterPro" id="IPR029045">
    <property type="entry name" value="ClpP/crotonase-like_dom_sf"/>
</dbReference>
<dbReference type="InterPro" id="IPR011763">
    <property type="entry name" value="COA_CT_C"/>
</dbReference>
<dbReference type="NCBIfam" id="TIGR00513">
    <property type="entry name" value="accA"/>
    <property type="match status" value="1"/>
</dbReference>
<dbReference type="NCBIfam" id="NF041504">
    <property type="entry name" value="AccA_sub"/>
    <property type="match status" value="1"/>
</dbReference>
<dbReference type="NCBIfam" id="NF004344">
    <property type="entry name" value="PRK05724.1"/>
    <property type="match status" value="1"/>
</dbReference>
<dbReference type="PANTHER" id="PTHR42853">
    <property type="entry name" value="ACETYL-COENZYME A CARBOXYLASE CARBOXYL TRANSFERASE SUBUNIT ALPHA"/>
    <property type="match status" value="1"/>
</dbReference>
<dbReference type="PANTHER" id="PTHR42853:SF3">
    <property type="entry name" value="ACETYL-COENZYME A CARBOXYLASE CARBOXYL TRANSFERASE SUBUNIT ALPHA, CHLOROPLASTIC"/>
    <property type="match status" value="1"/>
</dbReference>
<dbReference type="Pfam" id="PF03255">
    <property type="entry name" value="ACCA"/>
    <property type="match status" value="1"/>
</dbReference>
<dbReference type="PRINTS" id="PR01069">
    <property type="entry name" value="ACCCTRFRASEA"/>
</dbReference>
<dbReference type="SUPFAM" id="SSF52096">
    <property type="entry name" value="ClpP/crotonase"/>
    <property type="match status" value="1"/>
</dbReference>
<dbReference type="PROSITE" id="PS50989">
    <property type="entry name" value="COA_CT_CTER"/>
    <property type="match status" value="1"/>
</dbReference>
<reference key="1">
    <citation type="journal article" date="2005" name="J. Bacteriol.">
        <title>Completion of the genome sequence of Brucella abortus and comparison to the highly similar genomes of Brucella melitensis and Brucella suis.</title>
        <authorList>
            <person name="Halling S.M."/>
            <person name="Peterson-Burch B.D."/>
            <person name="Bricker B.J."/>
            <person name="Zuerner R.L."/>
            <person name="Qing Z."/>
            <person name="Li L.-L."/>
            <person name="Kapur V."/>
            <person name="Alt D.P."/>
            <person name="Olsen S.C."/>
        </authorList>
    </citation>
    <scope>NUCLEOTIDE SEQUENCE [LARGE SCALE GENOMIC DNA]</scope>
    <source>
        <strain>9-941</strain>
    </source>
</reference>
<comment type="function">
    <text evidence="1">Component of the acetyl coenzyme A carboxylase (ACC) complex. First, biotin carboxylase catalyzes the carboxylation of biotin on its carrier protein (BCCP) and then the CO(2) group is transferred by the carboxyltransferase to acetyl-CoA to form malonyl-CoA.</text>
</comment>
<comment type="catalytic activity">
    <reaction evidence="1">
        <text>N(6)-carboxybiotinyl-L-lysyl-[protein] + acetyl-CoA = N(6)-biotinyl-L-lysyl-[protein] + malonyl-CoA</text>
        <dbReference type="Rhea" id="RHEA:54728"/>
        <dbReference type="Rhea" id="RHEA-COMP:10505"/>
        <dbReference type="Rhea" id="RHEA-COMP:10506"/>
        <dbReference type="ChEBI" id="CHEBI:57288"/>
        <dbReference type="ChEBI" id="CHEBI:57384"/>
        <dbReference type="ChEBI" id="CHEBI:83144"/>
        <dbReference type="ChEBI" id="CHEBI:83145"/>
        <dbReference type="EC" id="2.1.3.15"/>
    </reaction>
</comment>
<comment type="pathway">
    <text evidence="1">Lipid metabolism; malonyl-CoA biosynthesis; malonyl-CoA from acetyl-CoA: step 1/1.</text>
</comment>
<comment type="subunit">
    <text evidence="1">Acetyl-CoA carboxylase is a heterohexamer composed of biotin carboxyl carrier protein (AccB), biotin carboxylase (AccC) and two subunits each of ACCase subunit alpha (AccA) and ACCase subunit beta (AccD).</text>
</comment>
<comment type="subcellular location">
    <subcellularLocation>
        <location evidence="1">Cytoplasm</location>
    </subcellularLocation>
</comment>
<comment type="similarity">
    <text evidence="1">Belongs to the AccA family.</text>
</comment>
<gene>
    <name evidence="1" type="primary">accA</name>
    <name type="ordered locus">BruAb1_2007</name>
</gene>
<protein>
    <recommendedName>
        <fullName evidence="1">Acetyl-coenzyme A carboxylase carboxyl transferase subunit alpha</fullName>
        <shortName evidence="1">ACCase subunit alpha</shortName>
        <shortName evidence="1">Acetyl-CoA carboxylase carboxyltransferase subunit alpha</shortName>
        <ecNumber evidence="1">2.1.3.15</ecNumber>
    </recommendedName>
</protein>
<feature type="chain" id="PRO_0000223742" description="Acetyl-coenzyme A carboxylase carboxyl transferase subunit alpha">
    <location>
        <begin position="1"/>
        <end position="317"/>
    </location>
</feature>
<feature type="domain" description="CoA carboxyltransferase C-terminal" evidence="2">
    <location>
        <begin position="40"/>
        <end position="293"/>
    </location>
</feature>